<accession>Q92AB2</accession>
<name>SYN_LISIN</name>
<sequence length="430" mass="48957">MKITINQASEFVGKEVTIGAWLANKRSSGKIAFLQLRDGTGFMQGVVVKAEVGDDMFATAKALTQETSLFVTGTINEDTRSPFGYEMAVSGVEVISESHDYPITPKEHGTEFLMDHRHLWLRSNRQHAIMKIRNEIIRASYEFFNKEGFLKIDPPILTGSAPEGTTELFHTKYFDEDAFLSQSGQLYMEAAAMAFGKVFSFGPTFRAEKSKTRRHLIEFWMIEPEMAFYKLEDSLQVQENYVAFLVKAVLDNCRLELDRLGRDVSHLEKMVAPFPRITYTEAIERLHELGFDDIVWGDDFGAPHETAIADSFEKPVFITHYPKAIKPFYMPEDPENDQVVLCADMIAPEGYGEIIGGSERIHDLETLQARMEDFDLDQEAYSWYLDLARYGSVPHSGFGLGLERTVAWISGTEHVRETIPFPRLLNRLYP</sequence>
<evidence type="ECO:0000255" key="1">
    <source>
        <dbReference type="HAMAP-Rule" id="MF_00534"/>
    </source>
</evidence>
<keyword id="KW-0030">Aminoacyl-tRNA synthetase</keyword>
<keyword id="KW-0067">ATP-binding</keyword>
<keyword id="KW-0963">Cytoplasm</keyword>
<keyword id="KW-0436">Ligase</keyword>
<keyword id="KW-0547">Nucleotide-binding</keyword>
<keyword id="KW-0648">Protein biosynthesis</keyword>
<gene>
    <name evidence="1" type="primary">asnS</name>
    <name type="ordered locus">lin2010</name>
</gene>
<organism>
    <name type="scientific">Listeria innocua serovar 6a (strain ATCC BAA-680 / CLIP 11262)</name>
    <dbReference type="NCBI Taxonomy" id="272626"/>
    <lineage>
        <taxon>Bacteria</taxon>
        <taxon>Bacillati</taxon>
        <taxon>Bacillota</taxon>
        <taxon>Bacilli</taxon>
        <taxon>Bacillales</taxon>
        <taxon>Listeriaceae</taxon>
        <taxon>Listeria</taxon>
    </lineage>
</organism>
<proteinExistence type="inferred from homology"/>
<reference key="1">
    <citation type="journal article" date="2001" name="Science">
        <title>Comparative genomics of Listeria species.</title>
        <authorList>
            <person name="Glaser P."/>
            <person name="Frangeul L."/>
            <person name="Buchrieser C."/>
            <person name="Rusniok C."/>
            <person name="Amend A."/>
            <person name="Baquero F."/>
            <person name="Berche P."/>
            <person name="Bloecker H."/>
            <person name="Brandt P."/>
            <person name="Chakraborty T."/>
            <person name="Charbit A."/>
            <person name="Chetouani F."/>
            <person name="Couve E."/>
            <person name="de Daruvar A."/>
            <person name="Dehoux P."/>
            <person name="Domann E."/>
            <person name="Dominguez-Bernal G."/>
            <person name="Duchaud E."/>
            <person name="Durant L."/>
            <person name="Dussurget O."/>
            <person name="Entian K.-D."/>
            <person name="Fsihi H."/>
            <person name="Garcia-del Portillo F."/>
            <person name="Garrido P."/>
            <person name="Gautier L."/>
            <person name="Goebel W."/>
            <person name="Gomez-Lopez N."/>
            <person name="Hain T."/>
            <person name="Hauf J."/>
            <person name="Jackson D."/>
            <person name="Jones L.-M."/>
            <person name="Kaerst U."/>
            <person name="Kreft J."/>
            <person name="Kuhn M."/>
            <person name="Kunst F."/>
            <person name="Kurapkat G."/>
            <person name="Madueno E."/>
            <person name="Maitournam A."/>
            <person name="Mata Vicente J."/>
            <person name="Ng E."/>
            <person name="Nedjari H."/>
            <person name="Nordsiek G."/>
            <person name="Novella S."/>
            <person name="de Pablos B."/>
            <person name="Perez-Diaz J.-C."/>
            <person name="Purcell R."/>
            <person name="Remmel B."/>
            <person name="Rose M."/>
            <person name="Schlueter T."/>
            <person name="Simoes N."/>
            <person name="Tierrez A."/>
            <person name="Vazquez-Boland J.-A."/>
            <person name="Voss H."/>
            <person name="Wehland J."/>
            <person name="Cossart P."/>
        </authorList>
    </citation>
    <scope>NUCLEOTIDE SEQUENCE [LARGE SCALE GENOMIC DNA]</scope>
    <source>
        <strain>ATCC BAA-680 / CLIP 11262</strain>
    </source>
</reference>
<comment type="catalytic activity">
    <reaction evidence="1">
        <text>tRNA(Asn) + L-asparagine + ATP = L-asparaginyl-tRNA(Asn) + AMP + diphosphate + H(+)</text>
        <dbReference type="Rhea" id="RHEA:11180"/>
        <dbReference type="Rhea" id="RHEA-COMP:9659"/>
        <dbReference type="Rhea" id="RHEA-COMP:9674"/>
        <dbReference type="ChEBI" id="CHEBI:15378"/>
        <dbReference type="ChEBI" id="CHEBI:30616"/>
        <dbReference type="ChEBI" id="CHEBI:33019"/>
        <dbReference type="ChEBI" id="CHEBI:58048"/>
        <dbReference type="ChEBI" id="CHEBI:78442"/>
        <dbReference type="ChEBI" id="CHEBI:78515"/>
        <dbReference type="ChEBI" id="CHEBI:456215"/>
        <dbReference type="EC" id="6.1.1.22"/>
    </reaction>
</comment>
<comment type="subunit">
    <text evidence="1">Homodimer.</text>
</comment>
<comment type="subcellular location">
    <subcellularLocation>
        <location evidence="1">Cytoplasm</location>
    </subcellularLocation>
</comment>
<comment type="similarity">
    <text evidence="1">Belongs to the class-II aminoacyl-tRNA synthetase family.</text>
</comment>
<dbReference type="EC" id="6.1.1.22" evidence="1"/>
<dbReference type="EMBL" id="AL596170">
    <property type="protein sequence ID" value="CAC97240.1"/>
    <property type="molecule type" value="Genomic_DNA"/>
</dbReference>
<dbReference type="PIR" id="AH1683">
    <property type="entry name" value="AH1683"/>
</dbReference>
<dbReference type="RefSeq" id="WP_003763069.1">
    <property type="nucleotide sequence ID" value="NC_003212.1"/>
</dbReference>
<dbReference type="SMR" id="Q92AB2"/>
<dbReference type="STRING" id="272626.gene:17566368"/>
<dbReference type="GeneID" id="93235348"/>
<dbReference type="KEGG" id="lin:ansB.2"/>
<dbReference type="eggNOG" id="COG0017">
    <property type="taxonomic scope" value="Bacteria"/>
</dbReference>
<dbReference type="HOGENOM" id="CLU_004553_2_0_9"/>
<dbReference type="OrthoDB" id="9762036at2"/>
<dbReference type="Proteomes" id="UP000002513">
    <property type="component" value="Chromosome"/>
</dbReference>
<dbReference type="GO" id="GO:0005737">
    <property type="term" value="C:cytoplasm"/>
    <property type="evidence" value="ECO:0007669"/>
    <property type="project" value="UniProtKB-SubCell"/>
</dbReference>
<dbReference type="GO" id="GO:0004816">
    <property type="term" value="F:asparagine-tRNA ligase activity"/>
    <property type="evidence" value="ECO:0007669"/>
    <property type="project" value="UniProtKB-UniRule"/>
</dbReference>
<dbReference type="GO" id="GO:0005524">
    <property type="term" value="F:ATP binding"/>
    <property type="evidence" value="ECO:0007669"/>
    <property type="project" value="UniProtKB-UniRule"/>
</dbReference>
<dbReference type="GO" id="GO:0140096">
    <property type="term" value="F:catalytic activity, acting on a protein"/>
    <property type="evidence" value="ECO:0007669"/>
    <property type="project" value="UniProtKB-ARBA"/>
</dbReference>
<dbReference type="GO" id="GO:0003676">
    <property type="term" value="F:nucleic acid binding"/>
    <property type="evidence" value="ECO:0007669"/>
    <property type="project" value="InterPro"/>
</dbReference>
<dbReference type="GO" id="GO:0016740">
    <property type="term" value="F:transferase activity"/>
    <property type="evidence" value="ECO:0007669"/>
    <property type="project" value="UniProtKB-ARBA"/>
</dbReference>
<dbReference type="GO" id="GO:0006421">
    <property type="term" value="P:asparaginyl-tRNA aminoacylation"/>
    <property type="evidence" value="ECO:0007669"/>
    <property type="project" value="UniProtKB-UniRule"/>
</dbReference>
<dbReference type="CDD" id="cd04323">
    <property type="entry name" value="AsnRS_cyto_like_N"/>
    <property type="match status" value="1"/>
</dbReference>
<dbReference type="CDD" id="cd00776">
    <property type="entry name" value="AsxRS_core"/>
    <property type="match status" value="1"/>
</dbReference>
<dbReference type="Gene3D" id="3.30.930.10">
    <property type="entry name" value="Bira Bifunctional Protein, Domain 2"/>
    <property type="match status" value="1"/>
</dbReference>
<dbReference type="Gene3D" id="2.40.50.140">
    <property type="entry name" value="Nucleic acid-binding proteins"/>
    <property type="match status" value="1"/>
</dbReference>
<dbReference type="HAMAP" id="MF_00534">
    <property type="entry name" value="Asn_tRNA_synth"/>
    <property type="match status" value="1"/>
</dbReference>
<dbReference type="InterPro" id="IPR004364">
    <property type="entry name" value="Aa-tRNA-synt_II"/>
</dbReference>
<dbReference type="InterPro" id="IPR006195">
    <property type="entry name" value="aa-tRNA-synth_II"/>
</dbReference>
<dbReference type="InterPro" id="IPR045864">
    <property type="entry name" value="aa-tRNA-synth_II/BPL/LPL"/>
</dbReference>
<dbReference type="InterPro" id="IPR004522">
    <property type="entry name" value="Asn-tRNA-ligase"/>
</dbReference>
<dbReference type="InterPro" id="IPR002312">
    <property type="entry name" value="Asp/Asn-tRNA-synth_IIb"/>
</dbReference>
<dbReference type="InterPro" id="IPR012340">
    <property type="entry name" value="NA-bd_OB-fold"/>
</dbReference>
<dbReference type="InterPro" id="IPR004365">
    <property type="entry name" value="NA-bd_OB_tRNA"/>
</dbReference>
<dbReference type="NCBIfam" id="TIGR00457">
    <property type="entry name" value="asnS"/>
    <property type="match status" value="1"/>
</dbReference>
<dbReference type="NCBIfam" id="NF003037">
    <property type="entry name" value="PRK03932.1"/>
    <property type="match status" value="1"/>
</dbReference>
<dbReference type="PANTHER" id="PTHR22594:SF34">
    <property type="entry name" value="ASPARAGINE--TRNA LIGASE, MITOCHONDRIAL-RELATED"/>
    <property type="match status" value="1"/>
</dbReference>
<dbReference type="PANTHER" id="PTHR22594">
    <property type="entry name" value="ASPARTYL/LYSYL-TRNA SYNTHETASE"/>
    <property type="match status" value="1"/>
</dbReference>
<dbReference type="Pfam" id="PF00152">
    <property type="entry name" value="tRNA-synt_2"/>
    <property type="match status" value="1"/>
</dbReference>
<dbReference type="Pfam" id="PF01336">
    <property type="entry name" value="tRNA_anti-codon"/>
    <property type="match status" value="1"/>
</dbReference>
<dbReference type="PRINTS" id="PR01042">
    <property type="entry name" value="TRNASYNTHASP"/>
</dbReference>
<dbReference type="SUPFAM" id="SSF55681">
    <property type="entry name" value="Class II aaRS and biotin synthetases"/>
    <property type="match status" value="1"/>
</dbReference>
<dbReference type="SUPFAM" id="SSF50249">
    <property type="entry name" value="Nucleic acid-binding proteins"/>
    <property type="match status" value="1"/>
</dbReference>
<dbReference type="PROSITE" id="PS50862">
    <property type="entry name" value="AA_TRNA_LIGASE_II"/>
    <property type="match status" value="1"/>
</dbReference>
<protein>
    <recommendedName>
        <fullName evidence="1">Asparagine--tRNA ligase</fullName>
        <ecNumber evidence="1">6.1.1.22</ecNumber>
    </recommendedName>
    <alternativeName>
        <fullName evidence="1">Asparaginyl-tRNA synthetase</fullName>
        <shortName evidence="1">AsnRS</shortName>
    </alternativeName>
</protein>
<feature type="chain" id="PRO_0000176422" description="Asparagine--tRNA ligase">
    <location>
        <begin position="1"/>
        <end position="430"/>
    </location>
</feature>